<name>KTHY_SHIB3</name>
<evidence type="ECO:0000255" key="1">
    <source>
        <dbReference type="HAMAP-Rule" id="MF_00165"/>
    </source>
</evidence>
<protein>
    <recommendedName>
        <fullName evidence="1">Thymidylate kinase</fullName>
        <ecNumber evidence="1">2.7.4.9</ecNumber>
    </recommendedName>
    <alternativeName>
        <fullName evidence="1">dTMP kinase</fullName>
    </alternativeName>
</protein>
<feature type="chain" id="PRO_1000097430" description="Thymidylate kinase">
    <location>
        <begin position="1"/>
        <end position="213"/>
    </location>
</feature>
<feature type="binding site" evidence="1">
    <location>
        <begin position="10"/>
        <end position="17"/>
    </location>
    <ligand>
        <name>ATP</name>
        <dbReference type="ChEBI" id="CHEBI:30616"/>
    </ligand>
</feature>
<sequence>MRSKYIVIEGLEGAGKTTARNVVVETLEQLGIRDMVFTREPGGTQLAEKLRSLVLDIKSVGDEVITDKAEVLMFYAARVQLVETVIKPALANGTWVIGDRHDLSTQAYQGGGRGIDQHMLATLRDAVLGDFRPDLTLYLDVTPEVGLKRARARGELDRIEQESFDFFNRTRARYLELAAQDKSIHTIDATQPLEAVMDAIRTTVTHWVKELDA</sequence>
<keyword id="KW-0067">ATP-binding</keyword>
<keyword id="KW-0418">Kinase</keyword>
<keyword id="KW-0545">Nucleotide biosynthesis</keyword>
<keyword id="KW-0547">Nucleotide-binding</keyword>
<keyword id="KW-1185">Reference proteome</keyword>
<keyword id="KW-0808">Transferase</keyword>
<gene>
    <name evidence="1" type="primary">tmk</name>
    <name type="ordered locus">SbBS512_E2226</name>
</gene>
<comment type="function">
    <text evidence="1">Phosphorylation of dTMP to form dTDP in both de novo and salvage pathways of dTTP synthesis.</text>
</comment>
<comment type="catalytic activity">
    <reaction evidence="1">
        <text>dTMP + ATP = dTDP + ADP</text>
        <dbReference type="Rhea" id="RHEA:13517"/>
        <dbReference type="ChEBI" id="CHEBI:30616"/>
        <dbReference type="ChEBI" id="CHEBI:58369"/>
        <dbReference type="ChEBI" id="CHEBI:63528"/>
        <dbReference type="ChEBI" id="CHEBI:456216"/>
        <dbReference type="EC" id="2.7.4.9"/>
    </reaction>
</comment>
<comment type="similarity">
    <text evidence="1">Belongs to the thymidylate kinase family.</text>
</comment>
<proteinExistence type="inferred from homology"/>
<organism>
    <name type="scientific">Shigella boydii serotype 18 (strain CDC 3083-94 / BS512)</name>
    <dbReference type="NCBI Taxonomy" id="344609"/>
    <lineage>
        <taxon>Bacteria</taxon>
        <taxon>Pseudomonadati</taxon>
        <taxon>Pseudomonadota</taxon>
        <taxon>Gammaproteobacteria</taxon>
        <taxon>Enterobacterales</taxon>
        <taxon>Enterobacteriaceae</taxon>
        <taxon>Shigella</taxon>
    </lineage>
</organism>
<accession>B2U523</accession>
<dbReference type="EC" id="2.7.4.9" evidence="1"/>
<dbReference type="EMBL" id="CP001063">
    <property type="protein sequence ID" value="ACD08604.1"/>
    <property type="molecule type" value="Genomic_DNA"/>
</dbReference>
<dbReference type="RefSeq" id="WP_001257000.1">
    <property type="nucleotide sequence ID" value="NC_010658.1"/>
</dbReference>
<dbReference type="SMR" id="B2U523"/>
<dbReference type="STRING" id="344609.SbBS512_E2226"/>
<dbReference type="GeneID" id="93776310"/>
<dbReference type="KEGG" id="sbc:SbBS512_E2226"/>
<dbReference type="HOGENOM" id="CLU_049131_0_1_6"/>
<dbReference type="Proteomes" id="UP000001030">
    <property type="component" value="Chromosome"/>
</dbReference>
<dbReference type="GO" id="GO:0005829">
    <property type="term" value="C:cytosol"/>
    <property type="evidence" value="ECO:0007669"/>
    <property type="project" value="TreeGrafter"/>
</dbReference>
<dbReference type="GO" id="GO:0005524">
    <property type="term" value="F:ATP binding"/>
    <property type="evidence" value="ECO:0007669"/>
    <property type="project" value="UniProtKB-UniRule"/>
</dbReference>
<dbReference type="GO" id="GO:0004798">
    <property type="term" value="F:dTMP kinase activity"/>
    <property type="evidence" value="ECO:0007669"/>
    <property type="project" value="UniProtKB-UniRule"/>
</dbReference>
<dbReference type="GO" id="GO:0006233">
    <property type="term" value="P:dTDP biosynthetic process"/>
    <property type="evidence" value="ECO:0007669"/>
    <property type="project" value="InterPro"/>
</dbReference>
<dbReference type="GO" id="GO:0006235">
    <property type="term" value="P:dTTP biosynthetic process"/>
    <property type="evidence" value="ECO:0007669"/>
    <property type="project" value="UniProtKB-UniRule"/>
</dbReference>
<dbReference type="GO" id="GO:0006227">
    <property type="term" value="P:dUDP biosynthetic process"/>
    <property type="evidence" value="ECO:0007669"/>
    <property type="project" value="TreeGrafter"/>
</dbReference>
<dbReference type="CDD" id="cd01672">
    <property type="entry name" value="TMPK"/>
    <property type="match status" value="1"/>
</dbReference>
<dbReference type="FunFam" id="3.40.50.300:FF:000321">
    <property type="entry name" value="Thymidylate kinase"/>
    <property type="match status" value="1"/>
</dbReference>
<dbReference type="Gene3D" id="3.40.50.300">
    <property type="entry name" value="P-loop containing nucleotide triphosphate hydrolases"/>
    <property type="match status" value="1"/>
</dbReference>
<dbReference type="HAMAP" id="MF_00165">
    <property type="entry name" value="Thymidylate_kinase"/>
    <property type="match status" value="1"/>
</dbReference>
<dbReference type="InterPro" id="IPR027417">
    <property type="entry name" value="P-loop_NTPase"/>
</dbReference>
<dbReference type="InterPro" id="IPR039430">
    <property type="entry name" value="Thymidylate_kin-like_dom"/>
</dbReference>
<dbReference type="InterPro" id="IPR018095">
    <property type="entry name" value="Thymidylate_kin_CS"/>
</dbReference>
<dbReference type="InterPro" id="IPR018094">
    <property type="entry name" value="Thymidylate_kinase"/>
</dbReference>
<dbReference type="NCBIfam" id="TIGR00041">
    <property type="entry name" value="DTMP_kinase"/>
    <property type="match status" value="1"/>
</dbReference>
<dbReference type="PANTHER" id="PTHR10344">
    <property type="entry name" value="THYMIDYLATE KINASE"/>
    <property type="match status" value="1"/>
</dbReference>
<dbReference type="PANTHER" id="PTHR10344:SF4">
    <property type="entry name" value="UMP-CMP KINASE 2, MITOCHONDRIAL"/>
    <property type="match status" value="1"/>
</dbReference>
<dbReference type="Pfam" id="PF02223">
    <property type="entry name" value="Thymidylate_kin"/>
    <property type="match status" value="1"/>
</dbReference>
<dbReference type="SUPFAM" id="SSF52540">
    <property type="entry name" value="P-loop containing nucleoside triphosphate hydrolases"/>
    <property type="match status" value="1"/>
</dbReference>
<dbReference type="PROSITE" id="PS01331">
    <property type="entry name" value="THYMIDYLATE_KINASE"/>
    <property type="match status" value="1"/>
</dbReference>
<reference key="1">
    <citation type="submission" date="2008-05" db="EMBL/GenBank/DDBJ databases">
        <title>Complete sequence of Shigella boydii serotype 18 strain BS512.</title>
        <authorList>
            <person name="Rasko D.A."/>
            <person name="Rosovitz M."/>
            <person name="Maurelli A.T."/>
            <person name="Myers G."/>
            <person name="Seshadri R."/>
            <person name="Cer R."/>
            <person name="Jiang L."/>
            <person name="Ravel J."/>
            <person name="Sebastian Y."/>
        </authorList>
    </citation>
    <scope>NUCLEOTIDE SEQUENCE [LARGE SCALE GENOMIC DNA]</scope>
    <source>
        <strain>CDC 3083-94 / BS512</strain>
    </source>
</reference>